<keyword id="KW-1267">Proteomics identification</keyword>
<keyword id="KW-1185">Reference proteome</keyword>
<reference key="1">
    <citation type="journal article" date="2001" name="Am. J. Respir. Cell Mol. Biol.">
        <title>Cloning of dexamethasone-induced transcript: a novel glucocorticoid-induced gene that is upregulated in emphysema.</title>
        <authorList>
            <person name="Edgar A.J."/>
            <person name="Birks E.J."/>
            <person name="Yacoub M.H."/>
            <person name="Polak J.M."/>
        </authorList>
    </citation>
    <scope>NUCLEOTIDE SEQUENCE [MRNA]</scope>
    <scope>TISSUE SPECIFICITY</scope>
    <scope>INDUCTION</scope>
    <source>
        <tissue>Lung</tissue>
    </source>
</reference>
<reference key="2">
    <citation type="journal article" date="2004" name="Nat. Genet.">
        <title>Complete sequencing and characterization of 21,243 full-length human cDNAs.</title>
        <authorList>
            <person name="Ota T."/>
            <person name="Suzuki Y."/>
            <person name="Nishikawa T."/>
            <person name="Otsuki T."/>
            <person name="Sugiyama T."/>
            <person name="Irie R."/>
            <person name="Wakamatsu A."/>
            <person name="Hayashi K."/>
            <person name="Sato H."/>
            <person name="Nagai K."/>
            <person name="Kimura K."/>
            <person name="Makita H."/>
            <person name="Sekine M."/>
            <person name="Obayashi M."/>
            <person name="Nishi T."/>
            <person name="Shibahara T."/>
            <person name="Tanaka T."/>
            <person name="Ishii S."/>
            <person name="Yamamoto J."/>
            <person name="Saito K."/>
            <person name="Kawai Y."/>
            <person name="Isono Y."/>
            <person name="Nakamura Y."/>
            <person name="Nagahari K."/>
            <person name="Murakami K."/>
            <person name="Yasuda T."/>
            <person name="Iwayanagi T."/>
            <person name="Wagatsuma M."/>
            <person name="Shiratori A."/>
            <person name="Sudo H."/>
            <person name="Hosoiri T."/>
            <person name="Kaku Y."/>
            <person name="Kodaira H."/>
            <person name="Kondo H."/>
            <person name="Sugawara M."/>
            <person name="Takahashi M."/>
            <person name="Kanda K."/>
            <person name="Yokoi T."/>
            <person name="Furuya T."/>
            <person name="Kikkawa E."/>
            <person name="Omura Y."/>
            <person name="Abe K."/>
            <person name="Kamihara K."/>
            <person name="Katsuta N."/>
            <person name="Sato K."/>
            <person name="Tanikawa M."/>
            <person name="Yamazaki M."/>
            <person name="Ninomiya K."/>
            <person name="Ishibashi T."/>
            <person name="Yamashita H."/>
            <person name="Murakawa K."/>
            <person name="Fujimori K."/>
            <person name="Tanai H."/>
            <person name="Kimata M."/>
            <person name="Watanabe M."/>
            <person name="Hiraoka S."/>
            <person name="Chiba Y."/>
            <person name="Ishida S."/>
            <person name="Ono Y."/>
            <person name="Takiguchi S."/>
            <person name="Watanabe S."/>
            <person name="Yosida M."/>
            <person name="Hotuta T."/>
            <person name="Kusano J."/>
            <person name="Kanehori K."/>
            <person name="Takahashi-Fujii A."/>
            <person name="Hara H."/>
            <person name="Tanase T.-O."/>
            <person name="Nomura Y."/>
            <person name="Togiya S."/>
            <person name="Komai F."/>
            <person name="Hara R."/>
            <person name="Takeuchi K."/>
            <person name="Arita M."/>
            <person name="Imose N."/>
            <person name="Musashino K."/>
            <person name="Yuuki H."/>
            <person name="Oshima A."/>
            <person name="Sasaki N."/>
            <person name="Aotsuka S."/>
            <person name="Yoshikawa Y."/>
            <person name="Matsunawa H."/>
            <person name="Ichihara T."/>
            <person name="Shiohata N."/>
            <person name="Sano S."/>
            <person name="Moriya S."/>
            <person name="Momiyama H."/>
            <person name="Satoh N."/>
            <person name="Takami S."/>
            <person name="Terashima Y."/>
            <person name="Suzuki O."/>
            <person name="Nakagawa S."/>
            <person name="Senoh A."/>
            <person name="Mizoguchi H."/>
            <person name="Goto Y."/>
            <person name="Shimizu F."/>
            <person name="Wakebe H."/>
            <person name="Hishigaki H."/>
            <person name="Watanabe T."/>
            <person name="Sugiyama A."/>
            <person name="Takemoto M."/>
            <person name="Kawakami B."/>
            <person name="Yamazaki M."/>
            <person name="Watanabe K."/>
            <person name="Kumagai A."/>
            <person name="Itakura S."/>
            <person name="Fukuzumi Y."/>
            <person name="Fujimori Y."/>
            <person name="Komiyama M."/>
            <person name="Tashiro H."/>
            <person name="Tanigami A."/>
            <person name="Fujiwara T."/>
            <person name="Ono T."/>
            <person name="Yamada K."/>
            <person name="Fujii Y."/>
            <person name="Ozaki K."/>
            <person name="Hirao M."/>
            <person name="Ohmori Y."/>
            <person name="Kawabata A."/>
            <person name="Hikiji T."/>
            <person name="Kobatake N."/>
            <person name="Inagaki H."/>
            <person name="Ikema Y."/>
            <person name="Okamoto S."/>
            <person name="Okitani R."/>
            <person name="Kawakami T."/>
            <person name="Noguchi S."/>
            <person name="Itoh T."/>
            <person name="Shigeta K."/>
            <person name="Senba T."/>
            <person name="Matsumura K."/>
            <person name="Nakajima Y."/>
            <person name="Mizuno T."/>
            <person name="Morinaga M."/>
            <person name="Sasaki M."/>
            <person name="Togashi T."/>
            <person name="Oyama M."/>
            <person name="Hata H."/>
            <person name="Watanabe M."/>
            <person name="Komatsu T."/>
            <person name="Mizushima-Sugano J."/>
            <person name="Satoh T."/>
            <person name="Shirai Y."/>
            <person name="Takahashi Y."/>
            <person name="Nakagawa K."/>
            <person name="Okumura K."/>
            <person name="Nagase T."/>
            <person name="Nomura N."/>
            <person name="Kikuchi H."/>
            <person name="Masuho Y."/>
            <person name="Yamashita R."/>
            <person name="Nakai K."/>
            <person name="Yada T."/>
            <person name="Nakamura Y."/>
            <person name="Ohara O."/>
            <person name="Isogai T."/>
            <person name="Sugano S."/>
        </authorList>
    </citation>
    <scope>NUCLEOTIDE SEQUENCE [LARGE SCALE MRNA]</scope>
    <source>
        <tissue>Brain cortex</tissue>
    </source>
</reference>
<reference key="3">
    <citation type="submission" date="2005-09" db="EMBL/GenBank/DDBJ databases">
        <authorList>
            <person name="Mural R.J."/>
            <person name="Istrail S."/>
            <person name="Sutton G.G."/>
            <person name="Florea L."/>
            <person name="Halpern A.L."/>
            <person name="Mobarry C.M."/>
            <person name="Lippert R."/>
            <person name="Walenz B."/>
            <person name="Shatkay H."/>
            <person name="Dew I."/>
            <person name="Miller J.R."/>
            <person name="Flanigan M.J."/>
            <person name="Edwards N.J."/>
            <person name="Bolanos R."/>
            <person name="Fasulo D."/>
            <person name="Halldorsson B.V."/>
            <person name="Hannenhalli S."/>
            <person name="Turner R."/>
            <person name="Yooseph S."/>
            <person name="Lu F."/>
            <person name="Nusskern D.R."/>
            <person name="Shue B.C."/>
            <person name="Zheng X.H."/>
            <person name="Zhong F."/>
            <person name="Delcher A.L."/>
            <person name="Huson D.H."/>
            <person name="Kravitz S.A."/>
            <person name="Mouchard L."/>
            <person name="Reinert K."/>
            <person name="Remington K.A."/>
            <person name="Clark A.G."/>
            <person name="Waterman M.S."/>
            <person name="Eichler E.E."/>
            <person name="Adams M.D."/>
            <person name="Hunkapiller M.W."/>
            <person name="Myers E.W."/>
            <person name="Venter J.C."/>
        </authorList>
    </citation>
    <scope>NUCLEOTIDE SEQUENCE [LARGE SCALE GENOMIC DNA]</scope>
</reference>
<reference key="4">
    <citation type="journal article" date="2004" name="Genome Res.">
        <title>The status, quality, and expansion of the NIH full-length cDNA project: the Mammalian Gene Collection (MGC).</title>
        <authorList>
            <consortium name="The MGC Project Team"/>
        </authorList>
    </citation>
    <scope>NUCLEOTIDE SEQUENCE [LARGE SCALE MRNA]</scope>
    <source>
        <tissue>Colon</tissue>
        <tissue>Kidney</tissue>
        <tissue>PNS</tissue>
    </source>
</reference>
<protein>
    <recommendedName>
        <fullName>Dexamethasone-induced protein</fullName>
    </recommendedName>
    <alternativeName>
        <fullName>Protein MYLE</fullName>
    </alternativeName>
</protein>
<comment type="interaction">
    <interactant intactId="EBI-724515">
        <id>O95424</id>
    </interactant>
    <interactant intactId="EBI-3922513">
        <id>O95393</id>
        <label>BMP10</label>
    </interactant>
    <organismsDiffer>false</organismsDiffer>
    <experiments>3</experiments>
</comment>
<comment type="interaction">
    <interactant intactId="EBI-724515">
        <id>O95424</id>
    </interactant>
    <interactant intactId="EBI-399080">
        <id>Q92993</id>
        <label>KAT5</label>
    </interactant>
    <organismsDiffer>false</organismsDiffer>
    <experiments>3</experiments>
</comment>
<comment type="interaction">
    <interactant intactId="EBI-724515">
        <id>O95424</id>
    </interactant>
    <interactant intactId="EBI-11742507">
        <id>Q8TAP4-4</id>
        <label>LMO3</label>
    </interactant>
    <organismsDiffer>false</organismsDiffer>
    <experiments>3</experiments>
</comment>
<comment type="interaction">
    <interactant intactId="EBI-724515">
        <id>O95424</id>
    </interactant>
    <interactant intactId="EBI-981985">
        <id>Q9Y5Y5</id>
        <label>PEX16</label>
    </interactant>
    <organismsDiffer>false</organismsDiffer>
    <experiments>3</experiments>
</comment>
<comment type="interaction">
    <interactant intactId="EBI-724515">
        <id>O95424</id>
    </interactant>
    <interactant intactId="EBI-1383528">
        <id>P17252</id>
        <label>PRKCA</label>
    </interactant>
    <organismsDiffer>false</organismsDiffer>
    <experiments>3</experiments>
</comment>
<comment type="interaction">
    <interactant intactId="EBI-724515">
        <id>O95424</id>
    </interactant>
    <interactant intactId="EBI-9090795">
        <id>Q15047-2</id>
        <label>SETDB1</label>
    </interactant>
    <organismsDiffer>false</organismsDiffer>
    <experiments>3</experiments>
</comment>
<comment type="interaction">
    <interactant intactId="EBI-724515">
        <id>O95424</id>
    </interactant>
    <interactant intactId="EBI-744081">
        <id>Q96EQ0</id>
        <label>SGTB</label>
    </interactant>
    <organismsDiffer>false</organismsDiffer>
    <experiments>3</experiments>
</comment>
<comment type="interaction">
    <interactant intactId="EBI-724515">
        <id>O95424</id>
    </interactant>
    <interactant intactId="EBI-10243654">
        <id>Q5BVD1</id>
        <label>TTMP</label>
    </interactant>
    <organismsDiffer>false</organismsDiffer>
    <experiments>3</experiments>
</comment>
<comment type="interaction">
    <interactant intactId="EBI-724515">
        <id>O95424</id>
    </interactant>
    <interactant intactId="EBI-741480">
        <id>Q9UMX0</id>
        <label>UBQLN1</label>
    </interactant>
    <organismsDiffer>false</organismsDiffer>
    <experiments>3</experiments>
</comment>
<comment type="interaction">
    <interactant intactId="EBI-724515">
        <id>O95424</id>
    </interactant>
    <interactant intactId="EBI-359832">
        <id>P61981</id>
        <label>YWHAG</label>
    </interactant>
    <organismsDiffer>false</organismsDiffer>
    <experiments>3</experiments>
</comment>
<comment type="tissue specificity">
    <text evidence="1">Highest levels in heart. Also expressed in brain, liver, pancreas, placenta and lung. Up-regulated in emphysematous lung compared to normal lung.</text>
</comment>
<comment type="induction">
    <text evidence="1">By dexamethasone.</text>
</comment>
<comment type="similarity">
    <text evidence="2">Belongs to the DEXI family.</text>
</comment>
<sequence length="95" mass="10429">MLGARVAAHLDALGPLVPYVPPPLLPSMFYVGLFFVNVLILYYAFLMEYIVLNVGLVFLPEDMDQALVDLGVLSDPGSGLYDADSELDVFDAYLE</sequence>
<name>DEXI_HUMAN</name>
<feature type="chain" id="PRO_0000096669" description="Dexamethasone-induced protein">
    <location>
        <begin position="1"/>
        <end position="95"/>
    </location>
</feature>
<accession>O95424</accession>
<accession>B2RAA7</accession>
<proteinExistence type="evidence at protein level"/>
<dbReference type="EMBL" id="AF108145">
    <property type="protein sequence ID" value="AAC83382.2"/>
    <property type="molecule type" value="mRNA"/>
</dbReference>
<dbReference type="EMBL" id="AK314111">
    <property type="protein sequence ID" value="BAG36804.1"/>
    <property type="molecule type" value="mRNA"/>
</dbReference>
<dbReference type="EMBL" id="CH471112">
    <property type="protein sequence ID" value="EAW85167.1"/>
    <property type="molecule type" value="Genomic_DNA"/>
</dbReference>
<dbReference type="EMBL" id="BC001083">
    <property type="protein sequence ID" value="AAH01083.2"/>
    <property type="molecule type" value="mRNA"/>
</dbReference>
<dbReference type="EMBL" id="BC037569">
    <property type="protein sequence ID" value="AAH37569.1"/>
    <property type="molecule type" value="mRNA"/>
</dbReference>
<dbReference type="EMBL" id="BC052989">
    <property type="protein sequence ID" value="AAH52989.1"/>
    <property type="molecule type" value="mRNA"/>
</dbReference>
<dbReference type="EMBL" id="BC071683">
    <property type="protein sequence ID" value="AAH71683.1"/>
    <property type="molecule type" value="mRNA"/>
</dbReference>
<dbReference type="CCDS" id="CCDS10545.1"/>
<dbReference type="RefSeq" id="NP_054734.2">
    <property type="nucleotide sequence ID" value="NM_014015.3"/>
</dbReference>
<dbReference type="RefSeq" id="XP_016878660.1">
    <property type="nucleotide sequence ID" value="XM_017023171.1"/>
</dbReference>
<dbReference type="BioGRID" id="118782">
    <property type="interactions" value="5"/>
</dbReference>
<dbReference type="FunCoup" id="O95424">
    <property type="interactions" value="92"/>
</dbReference>
<dbReference type="IntAct" id="O95424">
    <property type="interactions" value="13"/>
</dbReference>
<dbReference type="STRING" id="9606.ENSP00000493467"/>
<dbReference type="BioMuta" id="DEXI"/>
<dbReference type="PaxDb" id="9606-ENSP00000330509"/>
<dbReference type="PeptideAtlas" id="O95424"/>
<dbReference type="Antibodypedia" id="11474">
    <property type="antibodies" value="111 antibodies from 21 providers"/>
</dbReference>
<dbReference type="DNASU" id="28955"/>
<dbReference type="Ensembl" id="ENST00000331808.5">
    <property type="protein sequence ID" value="ENSP00000330509.4"/>
    <property type="gene ID" value="ENSG00000182108.11"/>
</dbReference>
<dbReference type="Ensembl" id="ENST00000469379.5">
    <property type="protein sequence ID" value="ENSP00000482265.1"/>
    <property type="gene ID" value="ENSG00000182108.11"/>
</dbReference>
<dbReference type="Ensembl" id="ENST00000570440.2">
    <property type="protein sequence ID" value="ENSP00000493467.1"/>
    <property type="gene ID" value="ENSG00000182108.11"/>
</dbReference>
<dbReference type="GeneID" id="28955"/>
<dbReference type="KEGG" id="hsa:28955"/>
<dbReference type="MANE-Select" id="ENST00000331808.5">
    <property type="protein sequence ID" value="ENSP00000330509.4"/>
    <property type="RefSeq nucleotide sequence ID" value="NM_014015.4"/>
    <property type="RefSeq protein sequence ID" value="NP_054734.2"/>
</dbReference>
<dbReference type="UCSC" id="uc002dal.4">
    <property type="organism name" value="human"/>
</dbReference>
<dbReference type="AGR" id="HGNC:13267"/>
<dbReference type="CTD" id="28955"/>
<dbReference type="DisGeNET" id="28955"/>
<dbReference type="GeneCards" id="DEXI"/>
<dbReference type="HGNC" id="HGNC:13267">
    <property type="gene designation" value="DEXI"/>
</dbReference>
<dbReference type="HPA" id="ENSG00000182108">
    <property type="expression patterns" value="Low tissue specificity"/>
</dbReference>
<dbReference type="MIM" id="617901">
    <property type="type" value="gene"/>
</dbReference>
<dbReference type="neXtProt" id="NX_O95424"/>
<dbReference type="OpenTargets" id="ENSG00000182108"/>
<dbReference type="PharmGKB" id="PA165449964"/>
<dbReference type="VEuPathDB" id="HostDB:ENSG00000182108"/>
<dbReference type="eggNOG" id="ENOG502S66C">
    <property type="taxonomic scope" value="Eukaryota"/>
</dbReference>
<dbReference type="GeneTree" id="ENSGT00390000013271"/>
<dbReference type="HOGENOM" id="CLU_184633_0_0_1"/>
<dbReference type="InParanoid" id="O95424"/>
<dbReference type="OMA" id="IPYMFYL"/>
<dbReference type="OrthoDB" id="9937503at2759"/>
<dbReference type="PAN-GO" id="O95424">
    <property type="GO annotations" value="0 GO annotations based on evolutionary models"/>
</dbReference>
<dbReference type="PhylomeDB" id="O95424"/>
<dbReference type="TreeFam" id="TF338557"/>
<dbReference type="PathwayCommons" id="O95424"/>
<dbReference type="SignaLink" id="O95424"/>
<dbReference type="BioGRID-ORCS" id="28955">
    <property type="hits" value="244 hits in 1124 CRISPR screens"/>
</dbReference>
<dbReference type="ChiTaRS" id="DEXI">
    <property type="organism name" value="human"/>
</dbReference>
<dbReference type="GenomeRNAi" id="28955"/>
<dbReference type="Pharos" id="O95424">
    <property type="development level" value="Tbio"/>
</dbReference>
<dbReference type="PRO" id="PR:O95424"/>
<dbReference type="Proteomes" id="UP000005640">
    <property type="component" value="Chromosome 16"/>
</dbReference>
<dbReference type="RNAct" id="O95424">
    <property type="molecule type" value="protein"/>
</dbReference>
<dbReference type="Bgee" id="ENSG00000182108">
    <property type="expression patterns" value="Expressed in apex of heart and 198 other cell types or tissues"/>
</dbReference>
<dbReference type="InterPro" id="IPR023259">
    <property type="entry name" value="Dexamethasone-induced"/>
</dbReference>
<dbReference type="PANTHER" id="PTHR17070">
    <property type="entry name" value="DEXAMETHASONE-INDUCED PROTEIN"/>
    <property type="match status" value="1"/>
</dbReference>
<dbReference type="PANTHER" id="PTHR17070:SF0">
    <property type="entry name" value="DEXAMETHASONE-INDUCED PROTEIN"/>
    <property type="match status" value="1"/>
</dbReference>
<dbReference type="Pfam" id="PF15198">
    <property type="entry name" value="Dexa_ind"/>
    <property type="match status" value="1"/>
</dbReference>
<dbReference type="PRINTS" id="PR02032">
    <property type="entry name" value="DEXMETHSNEIP"/>
</dbReference>
<gene>
    <name type="primary">DEXI</name>
    <name type="synonym">MYLE</name>
</gene>
<evidence type="ECO:0000269" key="1">
    <source>
    </source>
</evidence>
<evidence type="ECO:0000305" key="2"/>
<organism>
    <name type="scientific">Homo sapiens</name>
    <name type="common">Human</name>
    <dbReference type="NCBI Taxonomy" id="9606"/>
    <lineage>
        <taxon>Eukaryota</taxon>
        <taxon>Metazoa</taxon>
        <taxon>Chordata</taxon>
        <taxon>Craniata</taxon>
        <taxon>Vertebrata</taxon>
        <taxon>Euteleostomi</taxon>
        <taxon>Mammalia</taxon>
        <taxon>Eutheria</taxon>
        <taxon>Euarchontoglires</taxon>
        <taxon>Primates</taxon>
        <taxon>Haplorrhini</taxon>
        <taxon>Catarrhini</taxon>
        <taxon>Hominidae</taxon>
        <taxon>Homo</taxon>
    </lineage>
</organism>